<protein>
    <recommendedName>
        <fullName evidence="1">Urease subunit alpha</fullName>
        <ecNumber evidence="1">3.5.1.5</ecNumber>
    </recommendedName>
    <alternativeName>
        <fullName evidence="1">Urea amidohydrolase subunit alpha</fullName>
    </alternativeName>
</protein>
<sequence>MSRTLDRRQYAQIYGPTTGDRLRLGDTALVLEVERDLTTYGDECVFGGGKVLRDGMGQAAGAPPAQVLDLVITNALVVDHAGIFKADVGVRAGRIAALGKAGNPGVMAGVTPGMIVGPGTEVIAGEGLILTAGGIDTHIHFVSPQQAAEAIASGVTTLLGGGTGPATGTNATTCTPGAWNVARMLQATDALPVNVGLLGKGNASSPEGLAEQLRAGAAGLKLHEDWGTTPAAIDACLRVAEAHDVQVAIHTDTLNESGCAEDSIAAFAGRTIHTFHTEGAGGGHAPDIIRVCGEPNVLPSSTNPTRPFTVNTLDEHLDMLVVCHHLDPSLPEDLAFAESRIRGETIAAEDVLHDLGAISMMSSDSQAMGRVGEVVTRTWQTADKMRRQRGRLPGERGDHDNLRIRRYVAKYTVNPAVAHGLADEVGSVEPGKLADLVLWRPAFFGAKPELVLKGGLIAWAQMGDANASIPTPQPVLARPMFGALGRALGATCVAFVAGAALEDGAVQGYGLSKRLVAVRGCRGLGKRDMRLNDALPRMEVDPETYEVRADGELLRCEPAARLPLAQRYFLF</sequence>
<evidence type="ECO:0000255" key="1">
    <source>
        <dbReference type="HAMAP-Rule" id="MF_01953"/>
    </source>
</evidence>
<gene>
    <name evidence="1" type="primary">ureC</name>
    <name type="ordered locus">AnaeK_0975</name>
</gene>
<reference key="1">
    <citation type="submission" date="2008-08" db="EMBL/GenBank/DDBJ databases">
        <title>Complete sequence of Anaeromyxobacter sp. K.</title>
        <authorList>
            <consortium name="US DOE Joint Genome Institute"/>
            <person name="Lucas S."/>
            <person name="Copeland A."/>
            <person name="Lapidus A."/>
            <person name="Glavina del Rio T."/>
            <person name="Dalin E."/>
            <person name="Tice H."/>
            <person name="Bruce D."/>
            <person name="Goodwin L."/>
            <person name="Pitluck S."/>
            <person name="Saunders E."/>
            <person name="Brettin T."/>
            <person name="Detter J.C."/>
            <person name="Han C."/>
            <person name="Larimer F."/>
            <person name="Land M."/>
            <person name="Hauser L."/>
            <person name="Kyrpides N."/>
            <person name="Ovchinnikiva G."/>
            <person name="Beliaev A."/>
        </authorList>
    </citation>
    <scope>NUCLEOTIDE SEQUENCE [LARGE SCALE GENOMIC DNA]</scope>
    <source>
        <strain>K</strain>
    </source>
</reference>
<organism>
    <name type="scientific">Anaeromyxobacter sp. (strain K)</name>
    <dbReference type="NCBI Taxonomy" id="447217"/>
    <lineage>
        <taxon>Bacteria</taxon>
        <taxon>Pseudomonadati</taxon>
        <taxon>Myxococcota</taxon>
        <taxon>Myxococcia</taxon>
        <taxon>Myxococcales</taxon>
        <taxon>Cystobacterineae</taxon>
        <taxon>Anaeromyxobacteraceae</taxon>
        <taxon>Anaeromyxobacter</taxon>
    </lineage>
</organism>
<accession>B4UFU2</accession>
<keyword id="KW-0963">Cytoplasm</keyword>
<keyword id="KW-0378">Hydrolase</keyword>
<keyword id="KW-0479">Metal-binding</keyword>
<keyword id="KW-0533">Nickel</keyword>
<dbReference type="EC" id="3.5.1.5" evidence="1"/>
<dbReference type="EMBL" id="CP001131">
    <property type="protein sequence ID" value="ACG72210.1"/>
    <property type="molecule type" value="Genomic_DNA"/>
</dbReference>
<dbReference type="RefSeq" id="WP_012525037.1">
    <property type="nucleotide sequence ID" value="NC_011145.1"/>
</dbReference>
<dbReference type="SMR" id="B4UFU2"/>
<dbReference type="MEROPS" id="M38.982"/>
<dbReference type="KEGG" id="ank:AnaeK_0975"/>
<dbReference type="HOGENOM" id="CLU_000980_0_0_7"/>
<dbReference type="OrthoDB" id="9802793at2"/>
<dbReference type="UniPathway" id="UPA00258">
    <property type="reaction ID" value="UER00370"/>
</dbReference>
<dbReference type="Proteomes" id="UP000001871">
    <property type="component" value="Chromosome"/>
</dbReference>
<dbReference type="GO" id="GO:0005737">
    <property type="term" value="C:cytoplasm"/>
    <property type="evidence" value="ECO:0007669"/>
    <property type="project" value="UniProtKB-SubCell"/>
</dbReference>
<dbReference type="GO" id="GO:0016151">
    <property type="term" value="F:nickel cation binding"/>
    <property type="evidence" value="ECO:0007669"/>
    <property type="project" value="UniProtKB-UniRule"/>
</dbReference>
<dbReference type="GO" id="GO:0009039">
    <property type="term" value="F:urease activity"/>
    <property type="evidence" value="ECO:0007669"/>
    <property type="project" value="UniProtKB-UniRule"/>
</dbReference>
<dbReference type="GO" id="GO:0043419">
    <property type="term" value="P:urea catabolic process"/>
    <property type="evidence" value="ECO:0007669"/>
    <property type="project" value="UniProtKB-UniRule"/>
</dbReference>
<dbReference type="CDD" id="cd00375">
    <property type="entry name" value="Urease_alpha"/>
    <property type="match status" value="1"/>
</dbReference>
<dbReference type="Gene3D" id="3.20.20.140">
    <property type="entry name" value="Metal-dependent hydrolases"/>
    <property type="match status" value="1"/>
</dbReference>
<dbReference type="Gene3D" id="2.30.40.10">
    <property type="entry name" value="Urease, subunit C, domain 1"/>
    <property type="match status" value="1"/>
</dbReference>
<dbReference type="HAMAP" id="MF_01953">
    <property type="entry name" value="Urease_alpha"/>
    <property type="match status" value="1"/>
</dbReference>
<dbReference type="InterPro" id="IPR006680">
    <property type="entry name" value="Amidohydro-rel"/>
</dbReference>
<dbReference type="InterPro" id="IPR011059">
    <property type="entry name" value="Metal-dep_hydrolase_composite"/>
</dbReference>
<dbReference type="InterPro" id="IPR032466">
    <property type="entry name" value="Metal_Hydrolase"/>
</dbReference>
<dbReference type="InterPro" id="IPR011612">
    <property type="entry name" value="Urease_alpha_N_dom"/>
</dbReference>
<dbReference type="InterPro" id="IPR050112">
    <property type="entry name" value="Urease_alpha_subunit"/>
</dbReference>
<dbReference type="InterPro" id="IPR017950">
    <property type="entry name" value="Urease_AS"/>
</dbReference>
<dbReference type="InterPro" id="IPR005848">
    <property type="entry name" value="Urease_asu"/>
</dbReference>
<dbReference type="InterPro" id="IPR017951">
    <property type="entry name" value="Urease_asu_c"/>
</dbReference>
<dbReference type="InterPro" id="IPR029754">
    <property type="entry name" value="Urease_Ni-bd"/>
</dbReference>
<dbReference type="NCBIfam" id="NF009685">
    <property type="entry name" value="PRK13206.1"/>
    <property type="match status" value="1"/>
</dbReference>
<dbReference type="NCBIfam" id="NF009686">
    <property type="entry name" value="PRK13207.1"/>
    <property type="match status" value="1"/>
</dbReference>
<dbReference type="NCBIfam" id="TIGR01792">
    <property type="entry name" value="urease_alph"/>
    <property type="match status" value="1"/>
</dbReference>
<dbReference type="PANTHER" id="PTHR43440">
    <property type="entry name" value="UREASE"/>
    <property type="match status" value="1"/>
</dbReference>
<dbReference type="PANTHER" id="PTHR43440:SF1">
    <property type="entry name" value="UREASE"/>
    <property type="match status" value="1"/>
</dbReference>
<dbReference type="Pfam" id="PF01979">
    <property type="entry name" value="Amidohydro_1"/>
    <property type="match status" value="1"/>
</dbReference>
<dbReference type="Pfam" id="PF00449">
    <property type="entry name" value="Urease_alpha"/>
    <property type="match status" value="1"/>
</dbReference>
<dbReference type="PRINTS" id="PR01752">
    <property type="entry name" value="UREASE"/>
</dbReference>
<dbReference type="SUPFAM" id="SSF51338">
    <property type="entry name" value="Composite domain of metallo-dependent hydrolases"/>
    <property type="match status" value="2"/>
</dbReference>
<dbReference type="SUPFAM" id="SSF51556">
    <property type="entry name" value="Metallo-dependent hydrolases"/>
    <property type="match status" value="1"/>
</dbReference>
<dbReference type="PROSITE" id="PS01120">
    <property type="entry name" value="UREASE_1"/>
    <property type="match status" value="1"/>
</dbReference>
<dbReference type="PROSITE" id="PS00145">
    <property type="entry name" value="UREASE_2"/>
    <property type="match status" value="1"/>
</dbReference>
<dbReference type="PROSITE" id="PS51368">
    <property type="entry name" value="UREASE_3"/>
    <property type="match status" value="1"/>
</dbReference>
<feature type="chain" id="PRO_1000188860" description="Urease subunit alpha">
    <location>
        <begin position="1"/>
        <end position="571"/>
    </location>
</feature>
<feature type="domain" description="Urease" evidence="1">
    <location>
        <begin position="133"/>
        <end position="571"/>
    </location>
</feature>
<feature type="active site" description="Proton donor" evidence="1">
    <location>
        <position position="324"/>
    </location>
</feature>
<feature type="binding site" evidence="1">
    <location>
        <position position="138"/>
    </location>
    <ligand>
        <name>Ni(2+)</name>
        <dbReference type="ChEBI" id="CHEBI:49786"/>
        <label>1</label>
    </ligand>
</feature>
<feature type="binding site" evidence="1">
    <location>
        <position position="140"/>
    </location>
    <ligand>
        <name>Ni(2+)</name>
        <dbReference type="ChEBI" id="CHEBI:49786"/>
        <label>1</label>
    </ligand>
</feature>
<feature type="binding site" description="via carbamate group" evidence="1">
    <location>
        <position position="221"/>
    </location>
    <ligand>
        <name>Ni(2+)</name>
        <dbReference type="ChEBI" id="CHEBI:49786"/>
        <label>1</label>
    </ligand>
</feature>
<feature type="binding site" description="via carbamate group" evidence="1">
    <location>
        <position position="221"/>
    </location>
    <ligand>
        <name>Ni(2+)</name>
        <dbReference type="ChEBI" id="CHEBI:49786"/>
        <label>2</label>
    </ligand>
</feature>
<feature type="binding site" evidence="1">
    <location>
        <position position="223"/>
    </location>
    <ligand>
        <name>substrate</name>
    </ligand>
</feature>
<feature type="binding site" evidence="1">
    <location>
        <position position="250"/>
    </location>
    <ligand>
        <name>Ni(2+)</name>
        <dbReference type="ChEBI" id="CHEBI:49786"/>
        <label>2</label>
    </ligand>
</feature>
<feature type="binding site" evidence="1">
    <location>
        <position position="276"/>
    </location>
    <ligand>
        <name>Ni(2+)</name>
        <dbReference type="ChEBI" id="CHEBI:49786"/>
        <label>2</label>
    </ligand>
</feature>
<feature type="binding site" evidence="1">
    <location>
        <position position="364"/>
    </location>
    <ligand>
        <name>Ni(2+)</name>
        <dbReference type="ChEBI" id="CHEBI:49786"/>
        <label>1</label>
    </ligand>
</feature>
<feature type="modified residue" description="N6-carboxylysine" evidence="1">
    <location>
        <position position="221"/>
    </location>
</feature>
<proteinExistence type="inferred from homology"/>
<comment type="catalytic activity">
    <reaction evidence="1">
        <text>urea + 2 H2O + H(+) = hydrogencarbonate + 2 NH4(+)</text>
        <dbReference type="Rhea" id="RHEA:20557"/>
        <dbReference type="ChEBI" id="CHEBI:15377"/>
        <dbReference type="ChEBI" id="CHEBI:15378"/>
        <dbReference type="ChEBI" id="CHEBI:16199"/>
        <dbReference type="ChEBI" id="CHEBI:17544"/>
        <dbReference type="ChEBI" id="CHEBI:28938"/>
        <dbReference type="EC" id="3.5.1.5"/>
    </reaction>
</comment>
<comment type="cofactor">
    <cofactor evidence="1">
        <name>Ni cation</name>
        <dbReference type="ChEBI" id="CHEBI:25516"/>
    </cofactor>
    <text evidence="1">Binds 2 nickel ions per subunit.</text>
</comment>
<comment type="pathway">
    <text evidence="1">Nitrogen metabolism; urea degradation; CO(2) and NH(3) from urea (urease route): step 1/1.</text>
</comment>
<comment type="subunit">
    <text evidence="1">Heterotrimer of UreA (gamma), UreB (beta) and UreC (alpha) subunits. Three heterotrimers associate to form the active enzyme.</text>
</comment>
<comment type="subcellular location">
    <subcellularLocation>
        <location evidence="1">Cytoplasm</location>
    </subcellularLocation>
</comment>
<comment type="PTM">
    <text evidence="1">Carboxylation allows a single lysine to coordinate two nickel ions.</text>
</comment>
<comment type="similarity">
    <text evidence="1">Belongs to the metallo-dependent hydrolases superfamily. Urease alpha subunit family.</text>
</comment>
<name>URE1_ANASK</name>